<accession>Q9XF40</accession>
<reference key="1">
    <citation type="submission" date="1999-02" db="EMBL/GenBank/DDBJ databases">
        <title>Characterization of profilin from apple as the allergen Mal d 4.</title>
        <authorList>
            <person name="Scheurer S."/>
            <person name="Wangorsch A."/>
            <person name="Haustein D."/>
            <person name="Vieths S."/>
        </authorList>
    </citation>
    <scope>NUCLEOTIDE SEQUENCE [MRNA]</scope>
    <source>
        <strain>cv. Golden Delicious</strain>
    </source>
</reference>
<evidence type="ECO:0000250" key="1"/>
<evidence type="ECO:0000305" key="2"/>
<protein>
    <recommendedName>
        <fullName>Profilin-1</fullName>
    </recommendedName>
    <alternativeName>
        <fullName>GD4-1</fullName>
    </alternativeName>
    <alternativeName>
        <fullName>Pollen allergen Mal d 4.0301</fullName>
    </alternativeName>
    <allergenName>Mal d 4.0301</allergenName>
</protein>
<sequence>MSWQAYVDDRLMCDIDGHHLTAAAILGHDGSVWAHSSTFPKFKPEEITAIMKDFDEPGSLAPTGLHLGGTKYMVIQGEGGAVIRGKKGSGGVTVKKTGQALVFGIYEEPLTPGQCNMIVERLGDYLIDQGL</sequence>
<keyword id="KW-0009">Actin-binding</keyword>
<keyword id="KW-0020">Allergen</keyword>
<keyword id="KW-0963">Cytoplasm</keyword>
<keyword id="KW-0206">Cytoskeleton</keyword>
<organism>
    <name type="scientific">Malus domestica</name>
    <name type="common">Apple</name>
    <name type="synonym">Pyrus malus</name>
    <dbReference type="NCBI Taxonomy" id="3750"/>
    <lineage>
        <taxon>Eukaryota</taxon>
        <taxon>Viridiplantae</taxon>
        <taxon>Streptophyta</taxon>
        <taxon>Embryophyta</taxon>
        <taxon>Tracheophyta</taxon>
        <taxon>Spermatophyta</taxon>
        <taxon>Magnoliopsida</taxon>
        <taxon>eudicotyledons</taxon>
        <taxon>Gunneridae</taxon>
        <taxon>Pentapetalae</taxon>
        <taxon>rosids</taxon>
        <taxon>fabids</taxon>
        <taxon>Rosales</taxon>
        <taxon>Rosaceae</taxon>
        <taxon>Amygdaloideae</taxon>
        <taxon>Maleae</taxon>
        <taxon>Malus</taxon>
    </lineage>
</organism>
<name>PROF1_MALDO</name>
<dbReference type="EMBL" id="AF129426">
    <property type="protein sequence ID" value="AAD29412.1"/>
    <property type="molecule type" value="mRNA"/>
</dbReference>
<dbReference type="SMR" id="Q9XF40"/>
<dbReference type="Allergome" id="2418">
    <property type="allergen name" value="Mal d 4.0301"/>
</dbReference>
<dbReference type="Allergome" id="796">
    <property type="allergen name" value="Mal d 4"/>
</dbReference>
<dbReference type="GO" id="GO:0005938">
    <property type="term" value="C:cell cortex"/>
    <property type="evidence" value="ECO:0007669"/>
    <property type="project" value="TreeGrafter"/>
</dbReference>
<dbReference type="GO" id="GO:0005856">
    <property type="term" value="C:cytoskeleton"/>
    <property type="evidence" value="ECO:0007669"/>
    <property type="project" value="UniProtKB-SubCell"/>
</dbReference>
<dbReference type="GO" id="GO:0003785">
    <property type="term" value="F:actin monomer binding"/>
    <property type="evidence" value="ECO:0007669"/>
    <property type="project" value="TreeGrafter"/>
</dbReference>
<dbReference type="CDD" id="cd00148">
    <property type="entry name" value="PROF"/>
    <property type="match status" value="1"/>
</dbReference>
<dbReference type="FunFam" id="3.30.450.30:FF:000001">
    <property type="entry name" value="Profilin"/>
    <property type="match status" value="1"/>
</dbReference>
<dbReference type="Gene3D" id="3.30.450.30">
    <property type="entry name" value="Dynein light chain 2a, cytoplasmic"/>
    <property type="match status" value="1"/>
</dbReference>
<dbReference type="InterPro" id="IPR048278">
    <property type="entry name" value="PFN"/>
</dbReference>
<dbReference type="InterPro" id="IPR005455">
    <property type="entry name" value="PFN_euk"/>
</dbReference>
<dbReference type="InterPro" id="IPR036140">
    <property type="entry name" value="PFN_sf"/>
</dbReference>
<dbReference type="InterPro" id="IPR027310">
    <property type="entry name" value="Profilin_CS"/>
</dbReference>
<dbReference type="PANTHER" id="PTHR11604">
    <property type="entry name" value="PROFILIN"/>
    <property type="match status" value="1"/>
</dbReference>
<dbReference type="PANTHER" id="PTHR11604:SF35">
    <property type="entry name" value="PROFILIN-3"/>
    <property type="match status" value="1"/>
</dbReference>
<dbReference type="Pfam" id="PF00235">
    <property type="entry name" value="Profilin"/>
    <property type="match status" value="1"/>
</dbReference>
<dbReference type="PRINTS" id="PR00392">
    <property type="entry name" value="PROFILIN"/>
</dbReference>
<dbReference type="PRINTS" id="PR01640">
    <property type="entry name" value="PROFILINPLNT"/>
</dbReference>
<dbReference type="SMART" id="SM00392">
    <property type="entry name" value="PROF"/>
    <property type="match status" value="1"/>
</dbReference>
<dbReference type="SUPFAM" id="SSF55770">
    <property type="entry name" value="Profilin (actin-binding protein)"/>
    <property type="match status" value="1"/>
</dbReference>
<dbReference type="PROSITE" id="PS00414">
    <property type="entry name" value="PROFILIN"/>
    <property type="match status" value="1"/>
</dbReference>
<comment type="function">
    <text evidence="1">Binds to actin and affects the structure of the cytoskeleton. At high concentrations, profilin prevents the polymerization of actin, whereas it enhances it at low concentrations. By binding to PIP2, it inhibits the formation of IP3 and DG (By similarity).</text>
</comment>
<comment type="subunit">
    <text>Occurs in many kinds of cells as a complex with monomeric actin in a 1:1 ratio.</text>
</comment>
<comment type="subcellular location">
    <subcellularLocation>
        <location evidence="1">Cytoplasm</location>
        <location evidence="1">Cytoskeleton</location>
    </subcellularLocation>
</comment>
<comment type="allergen">
    <text>Causes an allergic reaction in human.</text>
</comment>
<comment type="similarity">
    <text evidence="2">Belongs to the profilin family.</text>
</comment>
<feature type="initiator methionine" description="Removed" evidence="1">
    <location>
        <position position="1"/>
    </location>
</feature>
<feature type="chain" id="PRO_0000199651" description="Profilin-1">
    <location>
        <begin position="2"/>
        <end position="131"/>
    </location>
</feature>
<proteinExistence type="evidence at protein level"/>